<proteinExistence type="inferred from homology"/>
<keyword id="KW-0131">Cell cycle</keyword>
<keyword id="KW-0132">Cell division</keyword>
<keyword id="KW-1003">Cell membrane</keyword>
<keyword id="KW-0175">Coiled coil</keyword>
<keyword id="KW-0472">Membrane</keyword>
<keyword id="KW-0717">Septation</keyword>
<keyword id="KW-0812">Transmembrane</keyword>
<keyword id="KW-1133">Transmembrane helix</keyword>
<evidence type="ECO:0000255" key="1">
    <source>
        <dbReference type="HAMAP-Rule" id="MF_00728"/>
    </source>
</evidence>
<dbReference type="EMBL" id="CP001186">
    <property type="protein sequence ID" value="ACK95187.1"/>
    <property type="molecule type" value="Genomic_DNA"/>
</dbReference>
<dbReference type="RefSeq" id="WP_000377314.1">
    <property type="nucleotide sequence ID" value="NC_011772.1"/>
</dbReference>
<dbReference type="SMR" id="B7IK49"/>
<dbReference type="KEGG" id="bcg:BCG9842_B0477"/>
<dbReference type="HOGENOM" id="CLU_034079_1_0_9"/>
<dbReference type="Proteomes" id="UP000006744">
    <property type="component" value="Chromosome"/>
</dbReference>
<dbReference type="GO" id="GO:0005886">
    <property type="term" value="C:plasma membrane"/>
    <property type="evidence" value="ECO:0007669"/>
    <property type="project" value="UniProtKB-SubCell"/>
</dbReference>
<dbReference type="GO" id="GO:0005940">
    <property type="term" value="C:septin ring"/>
    <property type="evidence" value="ECO:0007669"/>
    <property type="project" value="InterPro"/>
</dbReference>
<dbReference type="GO" id="GO:0000917">
    <property type="term" value="P:division septum assembly"/>
    <property type="evidence" value="ECO:0007669"/>
    <property type="project" value="UniProtKB-KW"/>
</dbReference>
<dbReference type="GO" id="GO:0000921">
    <property type="term" value="P:septin ring assembly"/>
    <property type="evidence" value="ECO:0007669"/>
    <property type="project" value="InterPro"/>
</dbReference>
<dbReference type="HAMAP" id="MF_00728">
    <property type="entry name" value="EzrA"/>
    <property type="match status" value="1"/>
</dbReference>
<dbReference type="InterPro" id="IPR010379">
    <property type="entry name" value="EzrA"/>
</dbReference>
<dbReference type="NCBIfam" id="NF003411">
    <property type="entry name" value="PRK04778.1-5"/>
    <property type="match status" value="1"/>
</dbReference>
<dbReference type="NCBIfam" id="NF003413">
    <property type="entry name" value="PRK04778.1-7"/>
    <property type="match status" value="1"/>
</dbReference>
<dbReference type="Pfam" id="PF06160">
    <property type="entry name" value="EzrA"/>
    <property type="match status" value="1"/>
</dbReference>
<feature type="chain" id="PRO_1000132703" description="Septation ring formation regulator EzrA">
    <location>
        <begin position="1"/>
        <end position="570"/>
    </location>
</feature>
<feature type="topological domain" description="Extracellular" evidence="1">
    <location>
        <begin position="1"/>
        <end position="6"/>
    </location>
</feature>
<feature type="transmembrane region" description="Helical" evidence="1">
    <location>
        <begin position="7"/>
        <end position="25"/>
    </location>
</feature>
<feature type="topological domain" description="Cytoplasmic" evidence="1">
    <location>
        <begin position="26"/>
        <end position="570"/>
    </location>
</feature>
<feature type="coiled-coil region" evidence="1">
    <location>
        <begin position="116"/>
        <end position="149"/>
    </location>
</feature>
<feature type="coiled-coil region" evidence="1">
    <location>
        <begin position="273"/>
        <end position="304"/>
    </location>
</feature>
<feature type="coiled-coil region" evidence="1">
    <location>
        <begin position="355"/>
        <end position="429"/>
    </location>
</feature>
<gene>
    <name evidence="1" type="primary">ezrA</name>
    <name type="ordered locus">BCG9842_B0477</name>
</gene>
<comment type="function">
    <text evidence="1">Negative regulator of FtsZ ring formation; modulates the frequency and position of FtsZ ring formation. Inhibits FtsZ ring formation at polar sites. Interacts either with FtsZ or with one of its binding partners to promote depolymerization.</text>
</comment>
<comment type="subcellular location">
    <subcellularLocation>
        <location evidence="1">Cell membrane</location>
        <topology evidence="1">Single-pass membrane protein</topology>
    </subcellularLocation>
    <text evidence="1">Colocalized with FtsZ to the nascent septal site.</text>
</comment>
<comment type="similarity">
    <text evidence="1">Belongs to the EzrA family.</text>
</comment>
<name>EZRA_BACC2</name>
<reference key="1">
    <citation type="submission" date="2008-10" db="EMBL/GenBank/DDBJ databases">
        <title>Genome sequence of Bacillus cereus G9842.</title>
        <authorList>
            <person name="Dodson R.J."/>
            <person name="Durkin A.S."/>
            <person name="Rosovitz M.J."/>
            <person name="Rasko D.A."/>
            <person name="Hoffmaster A."/>
            <person name="Ravel J."/>
            <person name="Sutton G."/>
        </authorList>
    </citation>
    <scope>NUCLEOTIDE SEQUENCE [LARGE SCALE GENOMIC DNA]</scope>
    <source>
        <strain>G9842</strain>
    </source>
</reference>
<accession>B7IK49</accession>
<organism>
    <name type="scientific">Bacillus cereus (strain G9842)</name>
    <dbReference type="NCBI Taxonomy" id="405531"/>
    <lineage>
        <taxon>Bacteria</taxon>
        <taxon>Bacillati</taxon>
        <taxon>Bacillota</taxon>
        <taxon>Bacilli</taxon>
        <taxon>Bacillales</taxon>
        <taxon>Bacillaceae</taxon>
        <taxon>Bacillus</taxon>
        <taxon>Bacillus cereus group</taxon>
    </lineage>
</organism>
<protein>
    <recommendedName>
        <fullName evidence="1">Septation ring formation regulator EzrA</fullName>
    </recommendedName>
</protein>
<sequence length="570" mass="66276">MDSILTIVIIVVSSILVLLMIELVIRNRSYKDIEALEQWKQEIKDKPVADELKRVKDLNMTGQTEELFGKWREEWDEIVSTTLPKADKDLAQARKFASQFSFRKAKHAMNESISGLDDADNRITGVLNELQQLLESHEKNSSEIEGLRDTYRSMKKSVLAHRHMYGAAEQKIEEMLDAESNKFKSFEEATDNGDYLKAREIVISLEEGLAGLEIIIHQIPDLLVECQATLPVQLEDLLQGHNDMVRQGYVLEYLEVPKEVRDMTTQLNTCLMDIQELHITEAAEKVEDLKTRLDGFYDQLEQEVHARHYVEQKTLSVYEDLEEIRIETIETKTETQLVKQSYQLQDKDIESQKVIEKQMHILTKRFEMLQLRVAEQDIAFSIIREELEEVYEQCETLKILHAEYKEMLQTMRKEEFEAREKLQEMRNTIFETKRFMQKSNLPGLPESIMEDLKRGQMAMQAVYEQLEVKPLNMNAVNSSLEEAYTTVNGVAEMTEELIGQAYLVEKLIQYGNRYRSHDESLAESLNYAEKLFREYQYDAALEQAASVLEQLEPGVVQKIAEYVDNEQTLS</sequence>